<organism>
    <name type="scientific">Cupriavidus necator (strain ATCC 17699 / DSM 428 / KCTC 22496 / NCIMB 10442 / H16 / Stanier 337)</name>
    <name type="common">Ralstonia eutropha</name>
    <dbReference type="NCBI Taxonomy" id="381666"/>
    <lineage>
        <taxon>Bacteria</taxon>
        <taxon>Pseudomonadati</taxon>
        <taxon>Pseudomonadota</taxon>
        <taxon>Betaproteobacteria</taxon>
        <taxon>Burkholderiales</taxon>
        <taxon>Burkholderiaceae</taxon>
        <taxon>Cupriavidus</taxon>
    </lineage>
</organism>
<feature type="chain" id="PRO_1000045147" description="Aspartate/glutamate leucyltransferase">
    <location>
        <begin position="1"/>
        <end position="262"/>
    </location>
</feature>
<accession>Q0KBT3</accession>
<gene>
    <name evidence="1" type="primary">bpt</name>
    <name type="ordered locus">H16_A1402</name>
</gene>
<evidence type="ECO:0000255" key="1">
    <source>
        <dbReference type="HAMAP-Rule" id="MF_00689"/>
    </source>
</evidence>
<dbReference type="EC" id="2.3.2.29" evidence="1"/>
<dbReference type="EMBL" id="AM260479">
    <property type="protein sequence ID" value="CAJ92538.1"/>
    <property type="molecule type" value="Genomic_DNA"/>
</dbReference>
<dbReference type="RefSeq" id="WP_011615055.1">
    <property type="nucleotide sequence ID" value="NC_008313.1"/>
</dbReference>
<dbReference type="SMR" id="Q0KBT3"/>
<dbReference type="STRING" id="381666.H16_A1402"/>
<dbReference type="KEGG" id="reh:H16_A1402"/>
<dbReference type="PATRIC" id="fig|381666.6.peg.1791"/>
<dbReference type="eggNOG" id="COG2935">
    <property type="taxonomic scope" value="Bacteria"/>
</dbReference>
<dbReference type="HOGENOM" id="CLU_077607_0_0_4"/>
<dbReference type="OrthoDB" id="9782022at2"/>
<dbReference type="Proteomes" id="UP000008210">
    <property type="component" value="Chromosome 1"/>
</dbReference>
<dbReference type="GO" id="GO:0005737">
    <property type="term" value="C:cytoplasm"/>
    <property type="evidence" value="ECO:0007669"/>
    <property type="project" value="UniProtKB-SubCell"/>
</dbReference>
<dbReference type="GO" id="GO:0004057">
    <property type="term" value="F:arginyl-tRNA--protein transferase activity"/>
    <property type="evidence" value="ECO:0007669"/>
    <property type="project" value="InterPro"/>
</dbReference>
<dbReference type="GO" id="GO:0008914">
    <property type="term" value="F:leucyl-tRNA--protein transferase activity"/>
    <property type="evidence" value="ECO:0007669"/>
    <property type="project" value="UniProtKB-UniRule"/>
</dbReference>
<dbReference type="GO" id="GO:0071596">
    <property type="term" value="P:ubiquitin-dependent protein catabolic process via the N-end rule pathway"/>
    <property type="evidence" value="ECO:0007669"/>
    <property type="project" value="InterPro"/>
</dbReference>
<dbReference type="HAMAP" id="MF_00689">
    <property type="entry name" value="Bpt"/>
    <property type="match status" value="1"/>
</dbReference>
<dbReference type="InterPro" id="IPR016181">
    <property type="entry name" value="Acyl_CoA_acyltransferase"/>
</dbReference>
<dbReference type="InterPro" id="IPR017138">
    <property type="entry name" value="Asp_Glu_LeuTrfase"/>
</dbReference>
<dbReference type="InterPro" id="IPR030700">
    <property type="entry name" value="N-end_Aminoacyl_Trfase"/>
</dbReference>
<dbReference type="InterPro" id="IPR007472">
    <property type="entry name" value="N-end_Aminoacyl_Trfase_C"/>
</dbReference>
<dbReference type="InterPro" id="IPR007471">
    <property type="entry name" value="N-end_Aminoacyl_Trfase_N"/>
</dbReference>
<dbReference type="NCBIfam" id="NF002341">
    <property type="entry name" value="PRK01305.1-1"/>
    <property type="match status" value="1"/>
</dbReference>
<dbReference type="NCBIfam" id="NF002342">
    <property type="entry name" value="PRK01305.1-3"/>
    <property type="match status" value="1"/>
</dbReference>
<dbReference type="NCBIfam" id="NF002346">
    <property type="entry name" value="PRK01305.2-3"/>
    <property type="match status" value="1"/>
</dbReference>
<dbReference type="PANTHER" id="PTHR21367">
    <property type="entry name" value="ARGININE-TRNA-PROTEIN TRANSFERASE 1"/>
    <property type="match status" value="1"/>
</dbReference>
<dbReference type="PANTHER" id="PTHR21367:SF1">
    <property type="entry name" value="ARGINYL-TRNA--PROTEIN TRANSFERASE 1"/>
    <property type="match status" value="1"/>
</dbReference>
<dbReference type="Pfam" id="PF04377">
    <property type="entry name" value="ATE_C"/>
    <property type="match status" value="1"/>
</dbReference>
<dbReference type="Pfam" id="PF04376">
    <property type="entry name" value="ATE_N"/>
    <property type="match status" value="1"/>
</dbReference>
<dbReference type="PIRSF" id="PIRSF037208">
    <property type="entry name" value="ATE_pro_prd"/>
    <property type="match status" value="1"/>
</dbReference>
<dbReference type="SUPFAM" id="SSF55729">
    <property type="entry name" value="Acyl-CoA N-acyltransferases (Nat)"/>
    <property type="match status" value="1"/>
</dbReference>
<proteinExistence type="inferred from homology"/>
<keyword id="KW-0012">Acyltransferase</keyword>
<keyword id="KW-0963">Cytoplasm</keyword>
<keyword id="KW-1185">Reference proteome</keyword>
<keyword id="KW-0808">Transferase</keyword>
<protein>
    <recommendedName>
        <fullName evidence="1">Aspartate/glutamate leucyltransferase</fullName>
        <ecNumber evidence="1">2.3.2.29</ecNumber>
    </recommendedName>
</protein>
<sequence length="262" mass="30128">MSKLKELPLSALQFYATAPYACSYLDGRMARSQVATPAHLINADVYSRLVRAGFRRSGIFTYRPYCDECHACTPCRVVVDQFVPDRSQRRAWSRHQHLQALVAPLTYVEEHYSLYLLYQSMRHAGGGMDQDSRDQYEQFLLQSRVNSRLVEFREPPGSPEAGRLRMVSMIDVLDDGLSSVYTFYDPLERNASYGTYNILWQIRQTRELGLPHLYLGYWIADSRKMAYKARFRPLQVLTGNHWHAFEDEAGDAASPAPASNRD</sequence>
<reference key="1">
    <citation type="journal article" date="2006" name="Nat. Biotechnol.">
        <title>Genome sequence of the bioplastic-producing 'Knallgas' bacterium Ralstonia eutropha H16.</title>
        <authorList>
            <person name="Pohlmann A."/>
            <person name="Fricke W.F."/>
            <person name="Reinecke F."/>
            <person name="Kusian B."/>
            <person name="Liesegang H."/>
            <person name="Cramm R."/>
            <person name="Eitinger T."/>
            <person name="Ewering C."/>
            <person name="Poetter M."/>
            <person name="Schwartz E."/>
            <person name="Strittmatter A."/>
            <person name="Voss I."/>
            <person name="Gottschalk G."/>
            <person name="Steinbuechel A."/>
            <person name="Friedrich B."/>
            <person name="Bowien B."/>
        </authorList>
    </citation>
    <scope>NUCLEOTIDE SEQUENCE [LARGE SCALE GENOMIC DNA]</scope>
    <source>
        <strain>ATCC 17699 / DSM 428 / KCTC 22496 / NCIMB 10442 / H16 / Stanier 337</strain>
    </source>
</reference>
<comment type="function">
    <text evidence="1">Functions in the N-end rule pathway of protein degradation where it conjugates Leu from its aminoacyl-tRNA to the N-termini of proteins containing an N-terminal aspartate or glutamate.</text>
</comment>
<comment type="catalytic activity">
    <reaction evidence="1">
        <text>N-terminal L-glutamyl-[protein] + L-leucyl-tRNA(Leu) = N-terminal L-leucyl-L-glutamyl-[protein] + tRNA(Leu) + H(+)</text>
        <dbReference type="Rhea" id="RHEA:50412"/>
        <dbReference type="Rhea" id="RHEA-COMP:9613"/>
        <dbReference type="Rhea" id="RHEA-COMP:9622"/>
        <dbReference type="Rhea" id="RHEA-COMP:12664"/>
        <dbReference type="Rhea" id="RHEA-COMP:12668"/>
        <dbReference type="ChEBI" id="CHEBI:15378"/>
        <dbReference type="ChEBI" id="CHEBI:64721"/>
        <dbReference type="ChEBI" id="CHEBI:78442"/>
        <dbReference type="ChEBI" id="CHEBI:78494"/>
        <dbReference type="ChEBI" id="CHEBI:133041"/>
        <dbReference type="EC" id="2.3.2.29"/>
    </reaction>
</comment>
<comment type="catalytic activity">
    <reaction evidence="1">
        <text>N-terminal L-aspartyl-[protein] + L-leucyl-tRNA(Leu) = N-terminal L-leucyl-L-aspartyl-[protein] + tRNA(Leu) + H(+)</text>
        <dbReference type="Rhea" id="RHEA:50420"/>
        <dbReference type="Rhea" id="RHEA-COMP:9613"/>
        <dbReference type="Rhea" id="RHEA-COMP:9622"/>
        <dbReference type="Rhea" id="RHEA-COMP:12669"/>
        <dbReference type="Rhea" id="RHEA-COMP:12674"/>
        <dbReference type="ChEBI" id="CHEBI:15378"/>
        <dbReference type="ChEBI" id="CHEBI:64720"/>
        <dbReference type="ChEBI" id="CHEBI:78442"/>
        <dbReference type="ChEBI" id="CHEBI:78494"/>
        <dbReference type="ChEBI" id="CHEBI:133042"/>
        <dbReference type="EC" id="2.3.2.29"/>
    </reaction>
</comment>
<comment type="subcellular location">
    <subcellularLocation>
        <location evidence="1">Cytoplasm</location>
    </subcellularLocation>
</comment>
<comment type="similarity">
    <text evidence="1">Belongs to the R-transferase family. Bpt subfamily.</text>
</comment>
<name>BPT_CUPNH</name>